<keyword id="KW-0687">Ribonucleoprotein</keyword>
<keyword id="KW-0689">Ribosomal protein</keyword>
<dbReference type="EMBL" id="CP000720">
    <property type="protein sequence ID" value="ABS48374.1"/>
    <property type="molecule type" value="Genomic_DNA"/>
</dbReference>
<dbReference type="RefSeq" id="WP_002210675.1">
    <property type="nucleotide sequence ID" value="NC_009708.1"/>
</dbReference>
<dbReference type="SMR" id="A7FNI4"/>
<dbReference type="GeneID" id="96663775"/>
<dbReference type="KEGG" id="ypi:YpsIP31758_3861"/>
<dbReference type="HOGENOM" id="CLU_086499_3_2_6"/>
<dbReference type="Proteomes" id="UP000002412">
    <property type="component" value="Chromosome"/>
</dbReference>
<dbReference type="GO" id="GO:0022625">
    <property type="term" value="C:cytosolic large ribosomal subunit"/>
    <property type="evidence" value="ECO:0007669"/>
    <property type="project" value="TreeGrafter"/>
</dbReference>
<dbReference type="GO" id="GO:0003729">
    <property type="term" value="F:mRNA binding"/>
    <property type="evidence" value="ECO:0007669"/>
    <property type="project" value="TreeGrafter"/>
</dbReference>
<dbReference type="GO" id="GO:0003735">
    <property type="term" value="F:structural constituent of ribosome"/>
    <property type="evidence" value="ECO:0007669"/>
    <property type="project" value="InterPro"/>
</dbReference>
<dbReference type="GO" id="GO:0006412">
    <property type="term" value="P:translation"/>
    <property type="evidence" value="ECO:0007669"/>
    <property type="project" value="UniProtKB-UniRule"/>
</dbReference>
<dbReference type="CDD" id="cd00387">
    <property type="entry name" value="Ribosomal_L7_L12"/>
    <property type="match status" value="1"/>
</dbReference>
<dbReference type="FunFam" id="3.30.1390.10:FF:000001">
    <property type="entry name" value="50S ribosomal protein L7/L12"/>
    <property type="match status" value="1"/>
</dbReference>
<dbReference type="Gene3D" id="3.30.1390.10">
    <property type="match status" value="1"/>
</dbReference>
<dbReference type="Gene3D" id="1.20.5.710">
    <property type="entry name" value="Single helix bin"/>
    <property type="match status" value="1"/>
</dbReference>
<dbReference type="HAMAP" id="MF_00368">
    <property type="entry name" value="Ribosomal_bL12"/>
    <property type="match status" value="1"/>
</dbReference>
<dbReference type="InterPro" id="IPR000206">
    <property type="entry name" value="Ribosomal_bL12"/>
</dbReference>
<dbReference type="InterPro" id="IPR013823">
    <property type="entry name" value="Ribosomal_bL12_C"/>
</dbReference>
<dbReference type="InterPro" id="IPR014719">
    <property type="entry name" value="Ribosomal_bL12_C/ClpS-like"/>
</dbReference>
<dbReference type="InterPro" id="IPR008932">
    <property type="entry name" value="Ribosomal_bL12_oligo"/>
</dbReference>
<dbReference type="InterPro" id="IPR036235">
    <property type="entry name" value="Ribosomal_bL12_oligo_N_sf"/>
</dbReference>
<dbReference type="NCBIfam" id="TIGR00855">
    <property type="entry name" value="L12"/>
    <property type="match status" value="1"/>
</dbReference>
<dbReference type="PANTHER" id="PTHR45987">
    <property type="entry name" value="39S RIBOSOMAL PROTEIN L12"/>
    <property type="match status" value="1"/>
</dbReference>
<dbReference type="PANTHER" id="PTHR45987:SF4">
    <property type="entry name" value="LARGE RIBOSOMAL SUBUNIT PROTEIN BL12M"/>
    <property type="match status" value="1"/>
</dbReference>
<dbReference type="Pfam" id="PF00542">
    <property type="entry name" value="Ribosomal_L12"/>
    <property type="match status" value="1"/>
</dbReference>
<dbReference type="Pfam" id="PF16320">
    <property type="entry name" value="Ribosomal_L12_N"/>
    <property type="match status" value="1"/>
</dbReference>
<dbReference type="SUPFAM" id="SSF54736">
    <property type="entry name" value="ClpS-like"/>
    <property type="match status" value="1"/>
</dbReference>
<dbReference type="SUPFAM" id="SSF48300">
    <property type="entry name" value="Ribosomal protein L7/12, oligomerisation (N-terminal) domain"/>
    <property type="match status" value="1"/>
</dbReference>
<sequence length="122" mass="12530">MSTITKDQILEGVAALSVMEIVELISAMEEKFGVSAAAVAAGPAAAVEAAEEQTEFDVVLASFGENKVAVIKAVRGATGLGLKEAKDLVESAPAVLKEGVNKDEAETLKKSLEEAGASVEIK</sequence>
<name>RL7_YERP3</name>
<evidence type="ECO:0000255" key="1">
    <source>
        <dbReference type="HAMAP-Rule" id="MF_00368"/>
    </source>
</evidence>
<evidence type="ECO:0000305" key="2"/>
<reference key="1">
    <citation type="journal article" date="2007" name="PLoS Genet.">
        <title>The complete genome sequence of Yersinia pseudotuberculosis IP31758, the causative agent of Far East scarlet-like fever.</title>
        <authorList>
            <person name="Eppinger M."/>
            <person name="Rosovitz M.J."/>
            <person name="Fricke W.F."/>
            <person name="Rasko D.A."/>
            <person name="Kokorina G."/>
            <person name="Fayolle C."/>
            <person name="Lindler L.E."/>
            <person name="Carniel E."/>
            <person name="Ravel J."/>
        </authorList>
    </citation>
    <scope>NUCLEOTIDE SEQUENCE [LARGE SCALE GENOMIC DNA]</scope>
    <source>
        <strain>IP 31758</strain>
    </source>
</reference>
<feature type="chain" id="PRO_1000059932" description="Large ribosomal subunit protein bL12">
    <location>
        <begin position="1"/>
        <end position="122"/>
    </location>
</feature>
<accession>A7FNI4</accession>
<protein>
    <recommendedName>
        <fullName evidence="1">Large ribosomal subunit protein bL12</fullName>
    </recommendedName>
    <alternativeName>
        <fullName evidence="2">50S ribosomal protein L7/L12</fullName>
    </alternativeName>
</protein>
<proteinExistence type="inferred from homology"/>
<gene>
    <name evidence="1" type="primary">rplL</name>
    <name type="ordered locus">YpsIP31758_3861</name>
</gene>
<comment type="function">
    <text evidence="1">Forms part of the ribosomal stalk which helps the ribosome interact with GTP-bound translation factors. Is thus essential for accurate translation.</text>
</comment>
<comment type="subunit">
    <text evidence="1">Homodimer. Part of the ribosomal stalk of the 50S ribosomal subunit. Forms a multimeric L10(L12)X complex, where L10 forms an elongated spine to which 2 to 4 L12 dimers bind in a sequential fashion. Binds GTP-bound translation factors.</text>
</comment>
<comment type="similarity">
    <text evidence="1">Belongs to the bacterial ribosomal protein bL12 family.</text>
</comment>
<organism>
    <name type="scientific">Yersinia pseudotuberculosis serotype O:1b (strain IP 31758)</name>
    <dbReference type="NCBI Taxonomy" id="349747"/>
    <lineage>
        <taxon>Bacteria</taxon>
        <taxon>Pseudomonadati</taxon>
        <taxon>Pseudomonadota</taxon>
        <taxon>Gammaproteobacteria</taxon>
        <taxon>Enterobacterales</taxon>
        <taxon>Yersiniaceae</taxon>
        <taxon>Yersinia</taxon>
    </lineage>
</organism>